<organism>
    <name type="scientific">Escherichia coli (strain 55989 / EAEC)</name>
    <dbReference type="NCBI Taxonomy" id="585055"/>
    <lineage>
        <taxon>Bacteria</taxon>
        <taxon>Pseudomonadati</taxon>
        <taxon>Pseudomonadota</taxon>
        <taxon>Gammaproteobacteria</taxon>
        <taxon>Enterobacterales</taxon>
        <taxon>Enterobacteriaceae</taxon>
        <taxon>Escherichia</taxon>
    </lineage>
</organism>
<sequence length="180" mass="21226">MIIYLHGFDSNSPGNHEKVLQLQFIDPDVRLISYSTRHPKHDMQHLLKEVDKMLQLNVDERPLICGVGLGGYWAERIGFLCDIRQVIFNPNLFPYENMEGKIDRPEEYADIATKCVTNFREKNRDRCLVILSRNDEALNSQRTSEELHHYYEIVWDEEQTHKFKNISPHLQRIKAFKTLG</sequence>
<proteinExistence type="inferred from homology"/>
<protein>
    <recommendedName>
        <fullName evidence="1">UPF0227 protein YcfP</fullName>
    </recommendedName>
</protein>
<evidence type="ECO:0000255" key="1">
    <source>
        <dbReference type="HAMAP-Rule" id="MF_01047"/>
    </source>
</evidence>
<name>YCFP_ECO55</name>
<comment type="similarity">
    <text evidence="1">Belongs to the UPF0227 family.</text>
</comment>
<feature type="chain" id="PRO_1000149606" description="UPF0227 protein YcfP">
    <location>
        <begin position="1"/>
        <end position="180"/>
    </location>
</feature>
<accession>B7LG41</accession>
<dbReference type="EMBL" id="CU928145">
    <property type="protein sequence ID" value="CAU97079.1"/>
    <property type="molecule type" value="Genomic_DNA"/>
</dbReference>
<dbReference type="RefSeq" id="WP_000587933.1">
    <property type="nucleotide sequence ID" value="NZ_CP028304.1"/>
</dbReference>
<dbReference type="SMR" id="B7LG41"/>
<dbReference type="ESTHER" id="ecoli-ycfp">
    <property type="family name" value="abh_upf00227"/>
</dbReference>
<dbReference type="GeneID" id="93776300"/>
<dbReference type="KEGG" id="eck:EC55989_1220"/>
<dbReference type="HOGENOM" id="CLU_128769_0_0_6"/>
<dbReference type="Proteomes" id="UP000000746">
    <property type="component" value="Chromosome"/>
</dbReference>
<dbReference type="FunFam" id="3.40.50.1820:FF:000007">
    <property type="entry name" value="UPF0227 protein YcfP"/>
    <property type="match status" value="1"/>
</dbReference>
<dbReference type="Gene3D" id="3.40.50.1820">
    <property type="entry name" value="alpha/beta hydrolase"/>
    <property type="match status" value="1"/>
</dbReference>
<dbReference type="HAMAP" id="MF_01047">
    <property type="entry name" value="UPF0227"/>
    <property type="match status" value="1"/>
</dbReference>
<dbReference type="InterPro" id="IPR029058">
    <property type="entry name" value="AB_hydrolase_fold"/>
</dbReference>
<dbReference type="InterPro" id="IPR022987">
    <property type="entry name" value="UPF0227"/>
</dbReference>
<dbReference type="InterPro" id="IPR008886">
    <property type="entry name" value="UPF0227/Esterase_YqiA"/>
</dbReference>
<dbReference type="NCBIfam" id="NF003431">
    <property type="entry name" value="PRK04940.1"/>
    <property type="match status" value="1"/>
</dbReference>
<dbReference type="PANTHER" id="PTHR35602">
    <property type="entry name" value="ESTERASE YQIA-RELATED"/>
    <property type="match status" value="1"/>
</dbReference>
<dbReference type="PANTHER" id="PTHR35602:SF2">
    <property type="entry name" value="UPF0227 PROTEIN YCFP"/>
    <property type="match status" value="1"/>
</dbReference>
<dbReference type="Pfam" id="PF05728">
    <property type="entry name" value="UPF0227"/>
    <property type="match status" value="1"/>
</dbReference>
<dbReference type="SUPFAM" id="SSF53474">
    <property type="entry name" value="alpha/beta-Hydrolases"/>
    <property type="match status" value="1"/>
</dbReference>
<gene>
    <name evidence="1" type="primary">ycfP</name>
    <name type="ordered locus">EC55989_1220</name>
</gene>
<keyword id="KW-1185">Reference proteome</keyword>
<reference key="1">
    <citation type="journal article" date="2009" name="PLoS Genet.">
        <title>Organised genome dynamics in the Escherichia coli species results in highly diverse adaptive paths.</title>
        <authorList>
            <person name="Touchon M."/>
            <person name="Hoede C."/>
            <person name="Tenaillon O."/>
            <person name="Barbe V."/>
            <person name="Baeriswyl S."/>
            <person name="Bidet P."/>
            <person name="Bingen E."/>
            <person name="Bonacorsi S."/>
            <person name="Bouchier C."/>
            <person name="Bouvet O."/>
            <person name="Calteau A."/>
            <person name="Chiapello H."/>
            <person name="Clermont O."/>
            <person name="Cruveiller S."/>
            <person name="Danchin A."/>
            <person name="Diard M."/>
            <person name="Dossat C."/>
            <person name="Karoui M.E."/>
            <person name="Frapy E."/>
            <person name="Garry L."/>
            <person name="Ghigo J.M."/>
            <person name="Gilles A.M."/>
            <person name="Johnson J."/>
            <person name="Le Bouguenec C."/>
            <person name="Lescat M."/>
            <person name="Mangenot S."/>
            <person name="Martinez-Jehanne V."/>
            <person name="Matic I."/>
            <person name="Nassif X."/>
            <person name="Oztas S."/>
            <person name="Petit M.A."/>
            <person name="Pichon C."/>
            <person name="Rouy Z."/>
            <person name="Ruf C.S."/>
            <person name="Schneider D."/>
            <person name="Tourret J."/>
            <person name="Vacherie B."/>
            <person name="Vallenet D."/>
            <person name="Medigue C."/>
            <person name="Rocha E.P.C."/>
            <person name="Denamur E."/>
        </authorList>
    </citation>
    <scope>NUCLEOTIDE SEQUENCE [LARGE SCALE GENOMIC DNA]</scope>
    <source>
        <strain>55989 / EAEC</strain>
    </source>
</reference>